<organism>
    <name type="scientific">Human herpesvirus 7 (strain JI)</name>
    <name type="common">HHV-7</name>
    <name type="synonym">Human T lymphotropic virus</name>
    <dbReference type="NCBI Taxonomy" id="57278"/>
    <lineage>
        <taxon>Viruses</taxon>
        <taxon>Duplodnaviria</taxon>
        <taxon>Heunggongvirae</taxon>
        <taxon>Peploviricota</taxon>
        <taxon>Herviviricetes</taxon>
        <taxon>Herpesvirales</taxon>
        <taxon>Orthoherpesviridae</taxon>
        <taxon>Betaherpesvirinae</taxon>
        <taxon>Roseolovirus</taxon>
        <taxon>Roseolovirus humanbeta7</taxon>
        <taxon>Human betaherpesvirus 7</taxon>
    </lineage>
</organism>
<organismHost>
    <name type="scientific">Homo sapiens</name>
    <name type="common">Human</name>
    <dbReference type="NCBI Taxonomy" id="9606"/>
</organismHost>
<gene>
    <name type="primary">U21</name>
</gene>
<accession>P60505</accession>
<accession>Q69503</accession>
<feature type="chain" id="PRO_0000116357" description="U21 glycoprotein">
    <location>
        <begin position="1"/>
        <end position="430"/>
    </location>
</feature>
<feature type="topological domain" description="Lumenal" evidence="2">
    <location>
        <begin position="1"/>
        <end position="362"/>
    </location>
</feature>
<feature type="transmembrane region" description="Helical" evidence="2">
    <location>
        <begin position="363"/>
        <end position="383"/>
    </location>
</feature>
<feature type="topological domain" description="Cytoplasmic" evidence="2">
    <location>
        <begin position="384"/>
        <end position="430"/>
    </location>
</feature>
<feature type="glycosylation site" description="N-linked (GlcNAc...) asparagine; by host" evidence="2">
    <location>
        <position position="31"/>
    </location>
</feature>
<feature type="glycosylation site" description="N-linked (GlcNAc...) asparagine; by host" evidence="2">
    <location>
        <position position="142"/>
    </location>
</feature>
<feature type="glycosylation site" description="N-linked (GlcNAc...) asparagine; by host" evidence="2">
    <location>
        <position position="162"/>
    </location>
</feature>
<feature type="glycosylation site" description="N-linked (GlcNAc...) asparagine; by host" evidence="2">
    <location>
        <position position="293"/>
    </location>
</feature>
<name>U21_HHV7J</name>
<reference key="1">
    <citation type="journal article" date="1996" name="J. Virol.">
        <title>Determination and analysis of the complete nucleotide sequence of human herpesvirus.</title>
        <authorList>
            <person name="Nicholas J."/>
        </authorList>
    </citation>
    <scope>NUCLEOTIDE SEQUENCE [LARGE SCALE GENOMIC DNA]</scope>
</reference>
<sequence>MWTILLFCVPVIYGELYPDFCPLAVVDFDVNATVDDLLLFDISLSKQCSDDKIRHSAVAAMTDNAFFFGNSETQIETDFGKYLAFNCYQVFSTLNHFLFKNFKKTKGLMKRYDKLCLDVESYIHIQIICSPFKSFIRLRRMNETGISPRILETTFYLQNKRNSTWVAIKNYLGEDDPFTYRIWHTLTHAKNFLINSCENDFNQLFFWQRKYLSLAKTFEATFKQGFNPMIEQRNEQRYRTNNIDCSFSKFRQNGVKVAVCKYTGWGVSGFGSLEVLQKIKSPFGEEWKRVGFNSTGAFTPLYGSDVLWGLIFLRVEMTTYVCTCTNKNTGTQIQVTLPDVDLDLLDSEKTSSNVFVDMLCYTLIAILFLAFVTAVVLLGVSCLDGVQKVLTWPLQHIQKEPVSEKIINLTNLMFGQEPLPKKESLKQQCL</sequence>
<comment type="function">
    <text evidence="1">Binds to MHC class I molecules in the endoplasmic reticulum and targets them from the Golgi directly to the lysosomes. Once in the lysosomes both proteins are degraded. In consequence, surface class I molecules are down-regulated and infected cells are masked for immune recognition by cytotoxic T lymphocytes (By similarity).</text>
</comment>
<comment type="subcellular location">
    <subcellularLocation>
        <location evidence="1">Host endoplasmic reticulum membrane</location>
        <topology evidence="1">Single-pass type I membrane protein</topology>
    </subcellularLocation>
</comment>
<comment type="domain">
    <text evidence="1">The ER-lumenal domain associates with class I MHC molecules and is responsible for lysosomal sorting.</text>
</comment>
<comment type="PTM">
    <text evidence="1">N-glycosylated.</text>
</comment>
<comment type="similarity">
    <text evidence="3">Belongs to the herpesviridae U21 family.</text>
</comment>
<proteinExistence type="inferred from homology"/>
<dbReference type="EMBL" id="U43400">
    <property type="protein sequence ID" value="AAC54683.1"/>
    <property type="molecule type" value="Genomic_DNA"/>
</dbReference>
<dbReference type="PIR" id="T41923">
    <property type="entry name" value="T41923"/>
</dbReference>
<dbReference type="RefSeq" id="YP_073761.1">
    <property type="nucleotide sequence ID" value="NC_001716.2"/>
</dbReference>
<dbReference type="GlyCosmos" id="P60505">
    <property type="glycosylation" value="4 sites, No reported glycans"/>
</dbReference>
<dbReference type="DNASU" id="3289479"/>
<dbReference type="GeneID" id="3289479"/>
<dbReference type="KEGG" id="vg:3289479"/>
<dbReference type="Proteomes" id="UP000009246">
    <property type="component" value="Segment"/>
</dbReference>
<dbReference type="GO" id="GO:0044167">
    <property type="term" value="C:host cell endoplasmic reticulum membrane"/>
    <property type="evidence" value="ECO:0007669"/>
    <property type="project" value="UniProtKB-SubCell"/>
</dbReference>
<dbReference type="GO" id="GO:0016020">
    <property type="term" value="C:membrane"/>
    <property type="evidence" value="ECO:0007669"/>
    <property type="project" value="UniProtKB-KW"/>
</dbReference>
<evidence type="ECO:0000250" key="1"/>
<evidence type="ECO:0000255" key="2"/>
<evidence type="ECO:0000305" key="3"/>
<keyword id="KW-0325">Glycoprotein</keyword>
<keyword id="KW-1038">Host endoplasmic reticulum</keyword>
<keyword id="KW-1043">Host membrane</keyword>
<keyword id="KW-0945">Host-virus interaction</keyword>
<keyword id="KW-0472">Membrane</keyword>
<keyword id="KW-1185">Reference proteome</keyword>
<keyword id="KW-0812">Transmembrane</keyword>
<keyword id="KW-1133">Transmembrane helix</keyword>
<keyword id="KW-0899">Viral immunoevasion</keyword>
<protein>
    <recommendedName>
        <fullName>U21 glycoprotein</fullName>
    </recommendedName>
</protein>